<reference key="1">
    <citation type="journal article" date="2012" name="J. Bacteriol.">
        <title>Complete genome sequence of Enterobacter aerogenes KCTC 2190.</title>
        <authorList>
            <person name="Shin S.H."/>
            <person name="Kim S."/>
            <person name="Kim J.Y."/>
            <person name="Lee S."/>
            <person name="Um Y."/>
            <person name="Oh M.K."/>
            <person name="Kim Y.R."/>
            <person name="Lee J."/>
            <person name="Yang K.S."/>
        </authorList>
    </citation>
    <scope>NUCLEOTIDE SEQUENCE [LARGE SCALE GENOMIC DNA]</scope>
    <source>
        <strain>ATCC 13048 / DSM 30053 / CCUG 1429 / JCM 1235 / KCTC 2190 / NBRC 13534 / NCIMB 10102 / NCTC 10006 / CDC 819-56</strain>
    </source>
</reference>
<reference key="2">
    <citation type="journal article" date="1993" name="J. Bacteriol.">
        <title>Molecular characterization of the Enterobacter aerogenes tonB gene: identification of a novel type of tonB box suppressor mutant.</title>
        <authorList>
            <person name="Bruske A.K."/>
            <person name="Heller K.J."/>
        </authorList>
    </citation>
    <scope>NUCLEOTIDE SEQUENCE [GENOMIC DNA] OF 169-286</scope>
    <source>
        <strain>ATCC 13048 / DSM 30053 / CCUG 1429 / JCM 1235 / KCTC 2190 / NBRC 13534 / NCIMB 10102 / NCTC 10006 / CDC 819-56</strain>
    </source>
</reference>
<comment type="function">
    <text evidence="2">Ketoamine kinase that phosphorylates ketoamines on the third carbon of the sugar moiety to generate ketoamine 3-phosphate.</text>
</comment>
<comment type="similarity">
    <text evidence="4">Belongs to the fructosamine kinase family.</text>
</comment>
<dbReference type="EC" id="2.7.1.-" evidence="2"/>
<dbReference type="EMBL" id="CP002824">
    <property type="protein sequence ID" value="AEG98302.1"/>
    <property type="molecule type" value="Genomic_DNA"/>
</dbReference>
<dbReference type="EMBL" id="X68477">
    <property type="protein sequence ID" value="CAA48497.1"/>
    <property type="molecule type" value="Genomic_DNA"/>
</dbReference>
<dbReference type="RefSeq" id="WP_015705109.1">
    <property type="nucleotide sequence ID" value="NC_015663.1"/>
</dbReference>
<dbReference type="RefSeq" id="YP_004593581.1">
    <property type="nucleotide sequence ID" value="NC_015663.1"/>
</dbReference>
<dbReference type="SMR" id="P46381"/>
<dbReference type="KEGG" id="eae:EAE_16955"/>
<dbReference type="PATRIC" id="fig|1028307.3.peg.3391"/>
<dbReference type="eggNOG" id="COG3001">
    <property type="taxonomic scope" value="Bacteria"/>
</dbReference>
<dbReference type="HOGENOM" id="CLU_036517_0_0_6"/>
<dbReference type="OrthoDB" id="5291879at2"/>
<dbReference type="Proteomes" id="UP000008881">
    <property type="component" value="Chromosome"/>
</dbReference>
<dbReference type="GO" id="GO:0005524">
    <property type="term" value="F:ATP binding"/>
    <property type="evidence" value="ECO:0007669"/>
    <property type="project" value="UniProtKB-KW"/>
</dbReference>
<dbReference type="GO" id="GO:0016301">
    <property type="term" value="F:kinase activity"/>
    <property type="evidence" value="ECO:0007669"/>
    <property type="project" value="UniProtKB-KW"/>
</dbReference>
<dbReference type="FunFam" id="3.90.1200.10:FF:000001">
    <property type="entry name" value="Fructosamine kinase family protein"/>
    <property type="match status" value="1"/>
</dbReference>
<dbReference type="Gene3D" id="3.90.1200.10">
    <property type="match status" value="1"/>
</dbReference>
<dbReference type="Gene3D" id="3.30.200.20">
    <property type="entry name" value="Phosphorylase Kinase, domain 1"/>
    <property type="match status" value="1"/>
</dbReference>
<dbReference type="InterPro" id="IPR016477">
    <property type="entry name" value="Fructo-/Ketosamine-3-kinase"/>
</dbReference>
<dbReference type="InterPro" id="IPR011009">
    <property type="entry name" value="Kinase-like_dom_sf"/>
</dbReference>
<dbReference type="PANTHER" id="PTHR12149">
    <property type="entry name" value="FRUCTOSAMINE 3 KINASE-RELATED PROTEIN"/>
    <property type="match status" value="1"/>
</dbReference>
<dbReference type="PANTHER" id="PTHR12149:SF8">
    <property type="entry name" value="PROTEIN-RIBULOSAMINE 3-KINASE"/>
    <property type="match status" value="1"/>
</dbReference>
<dbReference type="Pfam" id="PF03881">
    <property type="entry name" value="Fructosamin_kin"/>
    <property type="match status" value="1"/>
</dbReference>
<dbReference type="PIRSF" id="PIRSF006221">
    <property type="entry name" value="Ketosamine-3-kinase"/>
    <property type="match status" value="1"/>
</dbReference>
<dbReference type="SUPFAM" id="SSF56112">
    <property type="entry name" value="Protein kinase-like (PK-like)"/>
    <property type="match status" value="1"/>
</dbReference>
<keyword id="KW-0067">ATP-binding</keyword>
<keyword id="KW-0418">Kinase</keyword>
<keyword id="KW-0547">Nucleotide-binding</keyword>
<keyword id="KW-1185">Reference proteome</keyword>
<keyword id="KW-0808">Transferase</keyword>
<evidence type="ECO:0000250" key="1">
    <source>
        <dbReference type="UniProtKB" id="P9WI99"/>
    </source>
</evidence>
<evidence type="ECO:0000250" key="2">
    <source>
        <dbReference type="UniProtKB" id="Q9H479"/>
    </source>
</evidence>
<evidence type="ECO:0000250" key="3">
    <source>
        <dbReference type="UniProtKB" id="Q9HA64"/>
    </source>
</evidence>
<evidence type="ECO:0000305" key="4"/>
<gene>
    <name type="ordered locus">EAE_16955</name>
</gene>
<accession>P46381</accession>
<accession>G0E3D3</accession>
<protein>
    <recommendedName>
        <fullName>Probable ketoamine kinase EAE_16955</fullName>
        <ecNumber evidence="2">2.7.1.-</ecNumber>
    </recommendedName>
</protein>
<proteinExistence type="inferred from homology"/>
<sequence>MWQAISNLLSEQHTDGAEIELRNELPGGEIHAAWHLRFGGKDYFVKCDERELLPIFTAEADQLELLSRCKTVSVPQVFAVGSDRDYSFLVMEYLPPRPLDAHNAFLLGQQIAHLHQWSDQPQFGLDFDNDLSTTPQPNAWQRRWSTFFAEQRIGWQLELAAEKGLHFGDIDNIVESVQQRLSSHQPQPSLLHGDLWSGNCALGPNGPYIFDPACYWGDRECDLAMLPLHPEQPPQIYDGYQSVSPLPAGFLERQPIYQLYTLLNRAILFGGQHLVTAQKALDEALQ</sequence>
<name>KT3K_KLEAK</name>
<feature type="chain" id="PRO_0000216344" description="Probable ketoamine kinase EAE_16955">
    <location>
        <begin position="1"/>
        <end position="286"/>
    </location>
</feature>
<feature type="active site" description="Proton acceptor" evidence="1">
    <location>
        <position position="194"/>
    </location>
</feature>
<feature type="binding site" evidence="3">
    <location>
        <begin position="92"/>
        <end position="94"/>
    </location>
    <ligand>
        <name>ATP</name>
        <dbReference type="ChEBI" id="CHEBI:30616"/>
    </ligand>
</feature>
<organism>
    <name type="scientific">Klebsiella aerogenes (strain ATCC 13048 / DSM 30053 / CCUG 1429 / JCM 1235 / KCTC 2190 / NBRC 13534 / NCIMB 10102 / NCTC 10006 / CDC 819-56)</name>
    <name type="common">Enterobacter aerogenes</name>
    <dbReference type="NCBI Taxonomy" id="1028307"/>
    <lineage>
        <taxon>Bacteria</taxon>
        <taxon>Pseudomonadati</taxon>
        <taxon>Pseudomonadota</taxon>
        <taxon>Gammaproteobacteria</taxon>
        <taxon>Enterobacterales</taxon>
        <taxon>Enterobacteriaceae</taxon>
        <taxon>Klebsiella/Raoultella group</taxon>
        <taxon>Klebsiella</taxon>
    </lineage>
</organism>